<sequence>MTPQAFYLALEQAGFALTNHQKEQFDTYFKLLIDWNRKINLTAITEENEVYLKHFYDSVAPLLQGYIPNEPLRLLDIGAGAGFPSIPMKIMFPKLDVTIIDSLNKRIQFLQLLAKELGLEGVHFYHGRAEDFGQDKQFRGQFDLVTARAVARMQILSELTIPFLKIKGKLIALKAQAADQELEEAKKALQLLFAKVLDHQPYQLPNGDARYITLVEKKKETPNKYPRKAGIPNKKPL</sequence>
<name>RSMG_STRS7</name>
<proteinExistence type="inferred from homology"/>
<gene>
    <name evidence="1" type="primary">rsmG</name>
    <name type="ordered locus">SZO_03030</name>
</gene>
<feature type="chain" id="PRO_1000202506" description="Ribosomal RNA small subunit methyltransferase G">
    <location>
        <begin position="1"/>
        <end position="237"/>
    </location>
</feature>
<feature type="binding site" evidence="1">
    <location>
        <position position="78"/>
    </location>
    <ligand>
        <name>S-adenosyl-L-methionine</name>
        <dbReference type="ChEBI" id="CHEBI:59789"/>
    </ligand>
</feature>
<feature type="binding site" evidence="1">
    <location>
        <position position="83"/>
    </location>
    <ligand>
        <name>S-adenosyl-L-methionine</name>
        <dbReference type="ChEBI" id="CHEBI:59789"/>
    </ligand>
</feature>
<feature type="binding site" evidence="1">
    <location>
        <begin position="129"/>
        <end position="130"/>
    </location>
    <ligand>
        <name>S-adenosyl-L-methionine</name>
        <dbReference type="ChEBI" id="CHEBI:59789"/>
    </ligand>
</feature>
<feature type="binding site" evidence="1">
    <location>
        <position position="148"/>
    </location>
    <ligand>
        <name>S-adenosyl-L-methionine</name>
        <dbReference type="ChEBI" id="CHEBI:59789"/>
    </ligand>
</feature>
<reference key="1">
    <citation type="journal article" date="2009" name="PLoS Pathog.">
        <title>Genomic evidence for the evolution of Streptococcus equi: host restriction, increased virulence, and genetic exchange with human pathogens.</title>
        <authorList>
            <person name="Holden M.T.G."/>
            <person name="Heather Z."/>
            <person name="Paillot R."/>
            <person name="Steward K.F."/>
            <person name="Webb K."/>
            <person name="Ainslie F."/>
            <person name="Jourdan T."/>
            <person name="Bason N.C."/>
            <person name="Holroyd N.E."/>
            <person name="Mungall K."/>
            <person name="Quail M.A."/>
            <person name="Sanders M."/>
            <person name="Simmonds M."/>
            <person name="Willey D."/>
            <person name="Brooks K."/>
            <person name="Aanensen D.M."/>
            <person name="Spratt B.G."/>
            <person name="Jolley K.A."/>
            <person name="Maiden M.C.J."/>
            <person name="Kehoe M."/>
            <person name="Chanter N."/>
            <person name="Bentley S.D."/>
            <person name="Robinson C."/>
            <person name="Maskell D.J."/>
            <person name="Parkhill J."/>
            <person name="Waller A.S."/>
        </authorList>
    </citation>
    <scope>NUCLEOTIDE SEQUENCE [LARGE SCALE GENOMIC DNA]</scope>
    <source>
        <strain>H70</strain>
    </source>
</reference>
<comment type="function">
    <text evidence="1">Specifically methylates the N7 position of a guanine in 16S rRNA.</text>
</comment>
<comment type="subcellular location">
    <subcellularLocation>
        <location evidence="1">Cytoplasm</location>
    </subcellularLocation>
</comment>
<comment type="similarity">
    <text evidence="1">Belongs to the methyltransferase superfamily. RNA methyltransferase RsmG family.</text>
</comment>
<dbReference type="EC" id="2.1.1.-" evidence="1"/>
<dbReference type="EMBL" id="FM204884">
    <property type="protein sequence ID" value="CAW98104.1"/>
    <property type="molecule type" value="Genomic_DNA"/>
</dbReference>
<dbReference type="SMR" id="C0MG47"/>
<dbReference type="KEGG" id="seq:SZO_03030"/>
<dbReference type="PATRIC" id="fig|40041.11.peg.327"/>
<dbReference type="eggNOG" id="COG0357">
    <property type="taxonomic scope" value="Bacteria"/>
</dbReference>
<dbReference type="HOGENOM" id="CLU_065341_0_2_9"/>
<dbReference type="Proteomes" id="UP000001368">
    <property type="component" value="Chromosome"/>
</dbReference>
<dbReference type="GO" id="GO:0005829">
    <property type="term" value="C:cytosol"/>
    <property type="evidence" value="ECO:0007669"/>
    <property type="project" value="TreeGrafter"/>
</dbReference>
<dbReference type="GO" id="GO:0070043">
    <property type="term" value="F:rRNA (guanine-N7-)-methyltransferase activity"/>
    <property type="evidence" value="ECO:0007669"/>
    <property type="project" value="UniProtKB-UniRule"/>
</dbReference>
<dbReference type="CDD" id="cd02440">
    <property type="entry name" value="AdoMet_MTases"/>
    <property type="match status" value="1"/>
</dbReference>
<dbReference type="FunFam" id="3.40.50.150:FF:000041">
    <property type="entry name" value="Ribosomal RNA small subunit methyltransferase G"/>
    <property type="match status" value="1"/>
</dbReference>
<dbReference type="Gene3D" id="3.40.50.150">
    <property type="entry name" value="Vaccinia Virus protein VP39"/>
    <property type="match status" value="1"/>
</dbReference>
<dbReference type="HAMAP" id="MF_00074">
    <property type="entry name" value="16SrRNA_methyltr_G"/>
    <property type="match status" value="1"/>
</dbReference>
<dbReference type="InterPro" id="IPR003682">
    <property type="entry name" value="rRNA_ssu_MeTfrase_G"/>
</dbReference>
<dbReference type="InterPro" id="IPR029063">
    <property type="entry name" value="SAM-dependent_MTases_sf"/>
</dbReference>
<dbReference type="NCBIfam" id="TIGR00138">
    <property type="entry name" value="rsmG_gidB"/>
    <property type="match status" value="1"/>
</dbReference>
<dbReference type="PANTHER" id="PTHR31760">
    <property type="entry name" value="S-ADENOSYL-L-METHIONINE-DEPENDENT METHYLTRANSFERASES SUPERFAMILY PROTEIN"/>
    <property type="match status" value="1"/>
</dbReference>
<dbReference type="PANTHER" id="PTHR31760:SF0">
    <property type="entry name" value="S-ADENOSYL-L-METHIONINE-DEPENDENT METHYLTRANSFERASES SUPERFAMILY PROTEIN"/>
    <property type="match status" value="1"/>
</dbReference>
<dbReference type="Pfam" id="PF02527">
    <property type="entry name" value="GidB"/>
    <property type="match status" value="1"/>
</dbReference>
<dbReference type="PIRSF" id="PIRSF003078">
    <property type="entry name" value="GidB"/>
    <property type="match status" value="1"/>
</dbReference>
<dbReference type="SUPFAM" id="SSF53335">
    <property type="entry name" value="S-adenosyl-L-methionine-dependent methyltransferases"/>
    <property type="match status" value="1"/>
</dbReference>
<protein>
    <recommendedName>
        <fullName evidence="1">Ribosomal RNA small subunit methyltransferase G</fullName>
        <ecNumber evidence="1">2.1.1.-</ecNumber>
    </recommendedName>
    <alternativeName>
        <fullName evidence="1">16S rRNA 7-methylguanosine methyltransferase</fullName>
        <shortName evidence="1">16S rRNA m7G methyltransferase</shortName>
    </alternativeName>
</protein>
<accession>C0MG47</accession>
<evidence type="ECO:0000255" key="1">
    <source>
        <dbReference type="HAMAP-Rule" id="MF_00074"/>
    </source>
</evidence>
<organism>
    <name type="scientific">Streptococcus equi subsp. zooepidemicus (strain H70)</name>
    <dbReference type="NCBI Taxonomy" id="553483"/>
    <lineage>
        <taxon>Bacteria</taxon>
        <taxon>Bacillati</taxon>
        <taxon>Bacillota</taxon>
        <taxon>Bacilli</taxon>
        <taxon>Lactobacillales</taxon>
        <taxon>Streptococcaceae</taxon>
        <taxon>Streptococcus</taxon>
    </lineage>
</organism>
<keyword id="KW-0963">Cytoplasm</keyword>
<keyword id="KW-0489">Methyltransferase</keyword>
<keyword id="KW-0698">rRNA processing</keyword>
<keyword id="KW-0949">S-adenosyl-L-methionine</keyword>
<keyword id="KW-0808">Transferase</keyword>